<sequence>MPAAPDKDKALELALAQIDKQYGKGSVMRLGEEGRAPIAVIPTGAIALDVALGIGGLPRGRVIEVYGPESSGKTTVALHAVANAQRNGGIAAFIDAEHALDPDYAKKLGVDTDALLVSQPDTGEQALEIADMLVRSGALDILVIDSVAALVPRAEIEGEMGDSHVGLQARLMSQALRKMTGAMNNSGTTAIFINQLREKIGVMFGSPETTTGGKALKFYASVRLDVRRIETLKDGGEAVGNRTRVKVVKNKMAPPFKQAEFDILYGHGISREGSLIDMGVDQAILRKSGAWYTYEGDQLGQGKENARKFLRDNPDIANEIEKRIKEKLGIGAQLDAEAVEAVPAPVDF</sequence>
<reference key="1">
    <citation type="submission" date="1999-11" db="EMBL/GenBank/DDBJ databases">
        <title>Amycolatopsis mediterranei recA, recX genes.</title>
        <authorList>
            <person name="Gao J."/>
            <person name="Jiang W."/>
            <person name="Zhao G."/>
            <person name="Chiao J."/>
        </authorList>
    </citation>
    <scope>NUCLEOTIDE SEQUENCE [GENOMIC DNA]</scope>
</reference>
<reference key="2">
    <citation type="journal article" date="2010" name="Cell Res.">
        <title>Complete genome sequence of the rifamycin SV-producing Amycolatopsis mediterranei U32 revealed its genetic characteristics in phylogeny and metabolism.</title>
        <authorList>
            <person name="Zhao W."/>
            <person name="Zhong Y."/>
            <person name="Yuan H."/>
            <person name="Wang J."/>
            <person name="Zheng H."/>
            <person name="Wang Y."/>
            <person name="Cen X."/>
            <person name="Xu F."/>
            <person name="Bai J."/>
            <person name="Han X."/>
            <person name="Lu G."/>
            <person name="Zhu Y."/>
            <person name="Shao Z."/>
            <person name="Yan H."/>
            <person name="Li C."/>
            <person name="Peng N."/>
            <person name="Zhang Z."/>
            <person name="Zhang Y."/>
            <person name="Lin W."/>
            <person name="Fan Y."/>
            <person name="Qin Z."/>
            <person name="Hu Y."/>
            <person name="Zhu B."/>
            <person name="Wang S."/>
            <person name="Ding X."/>
            <person name="Zhao G.P."/>
        </authorList>
    </citation>
    <scope>NUCLEOTIDE SEQUENCE [LARGE SCALE GENOMIC DNA]</scope>
    <source>
        <strain>U-32</strain>
    </source>
</reference>
<evidence type="ECO:0000255" key="1">
    <source>
        <dbReference type="HAMAP-Rule" id="MF_00268"/>
    </source>
</evidence>
<feature type="chain" id="PRO_0000122638" description="Protein RecA">
    <location>
        <begin position="1"/>
        <end position="348"/>
    </location>
</feature>
<feature type="binding site" evidence="1">
    <location>
        <begin position="67"/>
        <end position="74"/>
    </location>
    <ligand>
        <name>ATP</name>
        <dbReference type="ChEBI" id="CHEBI:30616"/>
    </ligand>
</feature>
<comment type="function">
    <text evidence="1">Can catalyze the hydrolysis of ATP in the presence of single-stranded DNA, the ATP-dependent uptake of single-stranded DNA by duplex DNA, and the ATP-dependent hybridization of homologous single-stranded DNAs. It interacts with LexA causing its activation and leading to its autocatalytic cleavage.</text>
</comment>
<comment type="subcellular location">
    <subcellularLocation>
        <location evidence="1">Cytoplasm</location>
    </subcellularLocation>
</comment>
<comment type="similarity">
    <text evidence="1">Belongs to the RecA family.</text>
</comment>
<gene>
    <name evidence="1" type="primary">recA</name>
    <name type="ordered locus">AMED_2343</name>
</gene>
<accession>Q9REV6</accession>
<accession>D8HUU2</accession>
<organism>
    <name type="scientific">Amycolatopsis mediterranei (strain U-32)</name>
    <dbReference type="NCBI Taxonomy" id="749927"/>
    <lineage>
        <taxon>Bacteria</taxon>
        <taxon>Bacillati</taxon>
        <taxon>Actinomycetota</taxon>
        <taxon>Actinomycetes</taxon>
        <taxon>Pseudonocardiales</taxon>
        <taxon>Pseudonocardiaceae</taxon>
        <taxon>Amycolatopsis</taxon>
    </lineage>
</organism>
<proteinExistence type="inferred from homology"/>
<name>RECA_AMYMU</name>
<protein>
    <recommendedName>
        <fullName evidence="1">Protein RecA</fullName>
    </recommendedName>
    <alternativeName>
        <fullName evidence="1">Recombinase A</fullName>
    </alternativeName>
</protein>
<keyword id="KW-0067">ATP-binding</keyword>
<keyword id="KW-0963">Cytoplasm</keyword>
<keyword id="KW-0227">DNA damage</keyword>
<keyword id="KW-0233">DNA recombination</keyword>
<keyword id="KW-0234">DNA repair</keyword>
<keyword id="KW-0238">DNA-binding</keyword>
<keyword id="KW-0547">Nucleotide-binding</keyword>
<keyword id="KW-1185">Reference proteome</keyword>
<keyword id="KW-0742">SOS response</keyword>
<dbReference type="EMBL" id="AF208682">
    <property type="protein sequence ID" value="AAF19203.1"/>
    <property type="molecule type" value="Genomic_DNA"/>
</dbReference>
<dbReference type="EMBL" id="CP002000">
    <property type="protein sequence ID" value="ADJ44140.1"/>
    <property type="molecule type" value="Genomic_DNA"/>
</dbReference>
<dbReference type="RefSeq" id="WP_013224217.1">
    <property type="nucleotide sequence ID" value="NC_014318.1"/>
</dbReference>
<dbReference type="RefSeq" id="YP_003764542.1">
    <property type="nucleotide sequence ID" value="NC_014318.1"/>
</dbReference>
<dbReference type="SMR" id="Q9REV6"/>
<dbReference type="GeneID" id="92870124"/>
<dbReference type="KEGG" id="amd:AMED_2343"/>
<dbReference type="PATRIC" id="fig|749927.5.peg.2417"/>
<dbReference type="eggNOG" id="COG0468">
    <property type="taxonomic scope" value="Bacteria"/>
</dbReference>
<dbReference type="HOGENOM" id="CLU_040469_1_2_11"/>
<dbReference type="OrthoDB" id="9776733at2"/>
<dbReference type="Proteomes" id="UP000000328">
    <property type="component" value="Chromosome"/>
</dbReference>
<dbReference type="GO" id="GO:0005829">
    <property type="term" value="C:cytosol"/>
    <property type="evidence" value="ECO:0007669"/>
    <property type="project" value="TreeGrafter"/>
</dbReference>
<dbReference type="GO" id="GO:0005524">
    <property type="term" value="F:ATP binding"/>
    <property type="evidence" value="ECO:0007669"/>
    <property type="project" value="UniProtKB-UniRule"/>
</dbReference>
<dbReference type="GO" id="GO:0016887">
    <property type="term" value="F:ATP hydrolysis activity"/>
    <property type="evidence" value="ECO:0007669"/>
    <property type="project" value="InterPro"/>
</dbReference>
<dbReference type="GO" id="GO:0140664">
    <property type="term" value="F:ATP-dependent DNA damage sensor activity"/>
    <property type="evidence" value="ECO:0007669"/>
    <property type="project" value="InterPro"/>
</dbReference>
<dbReference type="GO" id="GO:0003684">
    <property type="term" value="F:damaged DNA binding"/>
    <property type="evidence" value="ECO:0007669"/>
    <property type="project" value="UniProtKB-UniRule"/>
</dbReference>
<dbReference type="GO" id="GO:0003697">
    <property type="term" value="F:single-stranded DNA binding"/>
    <property type="evidence" value="ECO:0007669"/>
    <property type="project" value="UniProtKB-UniRule"/>
</dbReference>
<dbReference type="GO" id="GO:0006310">
    <property type="term" value="P:DNA recombination"/>
    <property type="evidence" value="ECO:0007669"/>
    <property type="project" value="UniProtKB-UniRule"/>
</dbReference>
<dbReference type="GO" id="GO:0006281">
    <property type="term" value="P:DNA repair"/>
    <property type="evidence" value="ECO:0007669"/>
    <property type="project" value="UniProtKB-UniRule"/>
</dbReference>
<dbReference type="GO" id="GO:0009432">
    <property type="term" value="P:SOS response"/>
    <property type="evidence" value="ECO:0007669"/>
    <property type="project" value="UniProtKB-UniRule"/>
</dbReference>
<dbReference type="CDD" id="cd00983">
    <property type="entry name" value="RecA"/>
    <property type="match status" value="1"/>
</dbReference>
<dbReference type="FunFam" id="3.40.50.300:FF:000087">
    <property type="entry name" value="Recombinase RecA"/>
    <property type="match status" value="1"/>
</dbReference>
<dbReference type="Gene3D" id="3.40.50.300">
    <property type="entry name" value="P-loop containing nucleotide triphosphate hydrolases"/>
    <property type="match status" value="1"/>
</dbReference>
<dbReference type="HAMAP" id="MF_00268">
    <property type="entry name" value="RecA"/>
    <property type="match status" value="1"/>
</dbReference>
<dbReference type="InterPro" id="IPR003593">
    <property type="entry name" value="AAA+_ATPase"/>
</dbReference>
<dbReference type="InterPro" id="IPR013765">
    <property type="entry name" value="DNA_recomb/repair_RecA"/>
</dbReference>
<dbReference type="InterPro" id="IPR020584">
    <property type="entry name" value="DNA_recomb/repair_RecA_CS"/>
</dbReference>
<dbReference type="InterPro" id="IPR027417">
    <property type="entry name" value="P-loop_NTPase"/>
</dbReference>
<dbReference type="InterPro" id="IPR049261">
    <property type="entry name" value="RecA-like_C"/>
</dbReference>
<dbReference type="InterPro" id="IPR049428">
    <property type="entry name" value="RecA-like_N"/>
</dbReference>
<dbReference type="InterPro" id="IPR020588">
    <property type="entry name" value="RecA_ATP-bd"/>
</dbReference>
<dbReference type="InterPro" id="IPR023400">
    <property type="entry name" value="RecA_C_sf"/>
</dbReference>
<dbReference type="InterPro" id="IPR020587">
    <property type="entry name" value="RecA_monomer-monomer_interface"/>
</dbReference>
<dbReference type="NCBIfam" id="TIGR02012">
    <property type="entry name" value="tigrfam_recA"/>
    <property type="match status" value="1"/>
</dbReference>
<dbReference type="PANTHER" id="PTHR45900:SF1">
    <property type="entry name" value="MITOCHONDRIAL DNA REPAIR PROTEIN RECA HOMOLOG-RELATED"/>
    <property type="match status" value="1"/>
</dbReference>
<dbReference type="PANTHER" id="PTHR45900">
    <property type="entry name" value="RECA"/>
    <property type="match status" value="1"/>
</dbReference>
<dbReference type="Pfam" id="PF00154">
    <property type="entry name" value="RecA"/>
    <property type="match status" value="1"/>
</dbReference>
<dbReference type="Pfam" id="PF21096">
    <property type="entry name" value="RecA_C"/>
    <property type="match status" value="1"/>
</dbReference>
<dbReference type="PRINTS" id="PR00142">
    <property type="entry name" value="RECA"/>
</dbReference>
<dbReference type="SMART" id="SM00382">
    <property type="entry name" value="AAA"/>
    <property type="match status" value="1"/>
</dbReference>
<dbReference type="SUPFAM" id="SSF52540">
    <property type="entry name" value="P-loop containing nucleoside triphosphate hydrolases"/>
    <property type="match status" value="1"/>
</dbReference>
<dbReference type="SUPFAM" id="SSF54752">
    <property type="entry name" value="RecA protein, C-terminal domain"/>
    <property type="match status" value="1"/>
</dbReference>
<dbReference type="PROSITE" id="PS00321">
    <property type="entry name" value="RECA_1"/>
    <property type="match status" value="1"/>
</dbReference>
<dbReference type="PROSITE" id="PS50162">
    <property type="entry name" value="RECA_2"/>
    <property type="match status" value="1"/>
</dbReference>
<dbReference type="PROSITE" id="PS50163">
    <property type="entry name" value="RECA_3"/>
    <property type="match status" value="1"/>
</dbReference>